<name>YHJE_BACSU</name>
<gene>
    <name type="primary">yhjE</name>
    <name type="ordered locus">BSU10480</name>
</gene>
<organism>
    <name type="scientific">Bacillus subtilis (strain 168)</name>
    <dbReference type="NCBI Taxonomy" id="224308"/>
    <lineage>
        <taxon>Bacteria</taxon>
        <taxon>Bacillati</taxon>
        <taxon>Bacillota</taxon>
        <taxon>Bacilli</taxon>
        <taxon>Bacillales</taxon>
        <taxon>Bacillaceae</taxon>
        <taxon>Bacillus</taxon>
    </lineage>
</organism>
<dbReference type="EMBL" id="Y14081">
    <property type="protein sequence ID" value="CAA74467.1"/>
    <property type="molecule type" value="Genomic_DNA"/>
</dbReference>
<dbReference type="EMBL" id="AL009126">
    <property type="protein sequence ID" value="CAB12888.1"/>
    <property type="molecule type" value="Genomic_DNA"/>
</dbReference>
<dbReference type="PIR" id="E69833">
    <property type="entry name" value="E69833"/>
</dbReference>
<dbReference type="RefSeq" id="NP_388929.1">
    <property type="nucleotide sequence ID" value="NC_000964.3"/>
</dbReference>
<dbReference type="RefSeq" id="WP_010886465.1">
    <property type="nucleotide sequence ID" value="NZ_OZ025638.1"/>
</dbReference>
<dbReference type="FunCoup" id="O07559">
    <property type="interactions" value="57"/>
</dbReference>
<dbReference type="STRING" id="224308.BSU10480"/>
<dbReference type="PaxDb" id="224308-BSU10480"/>
<dbReference type="DNASU" id="936333"/>
<dbReference type="EnsemblBacteria" id="CAB12888">
    <property type="protein sequence ID" value="CAB12888"/>
    <property type="gene ID" value="BSU_10480"/>
</dbReference>
<dbReference type="GeneID" id="936333"/>
<dbReference type="KEGG" id="bsu:BSU10480"/>
<dbReference type="PATRIC" id="fig|224308.179.peg.1127"/>
<dbReference type="eggNOG" id="COG0398">
    <property type="taxonomic scope" value="Bacteria"/>
</dbReference>
<dbReference type="InParanoid" id="O07559"/>
<dbReference type="OrthoDB" id="1651121at2"/>
<dbReference type="PhylomeDB" id="O07559"/>
<dbReference type="BioCyc" id="BSUB:BSU10480-MONOMER"/>
<dbReference type="Proteomes" id="UP000001570">
    <property type="component" value="Chromosome"/>
</dbReference>
<dbReference type="GO" id="GO:0005886">
    <property type="term" value="C:plasma membrane"/>
    <property type="evidence" value="ECO:0000318"/>
    <property type="project" value="GO_Central"/>
</dbReference>
<dbReference type="InterPro" id="IPR015414">
    <property type="entry name" value="TMEM64"/>
</dbReference>
<dbReference type="InterPro" id="IPR032816">
    <property type="entry name" value="VTT_dom"/>
</dbReference>
<dbReference type="PANTHER" id="PTHR12677">
    <property type="entry name" value="GOLGI APPARATUS MEMBRANE PROTEIN TVP38-RELATED"/>
    <property type="match status" value="1"/>
</dbReference>
<dbReference type="PANTHER" id="PTHR12677:SF55">
    <property type="entry name" value="UNDECAPRENYL PHOSPHATE TRANSPORTER SAOUHSC_00901-RELATED"/>
    <property type="match status" value="1"/>
</dbReference>
<dbReference type="Pfam" id="PF09335">
    <property type="entry name" value="VTT_dom"/>
    <property type="match status" value="1"/>
</dbReference>
<comment type="subcellular location">
    <subcellularLocation>
        <location evidence="2">Cell membrane</location>
        <topology evidence="2">Multi-pass membrane protein</topology>
    </subcellularLocation>
</comment>
<sequence>MLEHFLSYLTQEHLTELFQSYRAFGPLIAVLLPLIEAFLPFLPLIVFVVANTNSFGLWEGFILSWAGSTAGSILVFLIVRQYGQRKLLGFIRSHPSVRKLMLWVERHGFGPMFLLLCFPFTPSAAVNVVAGLSRIGTRPFILAAASGKLVMIFMISFIGYDLHALITQPIRTVIAVLVITVLWYVGKKVERYLHVRASQREHDGGRQ</sequence>
<proteinExistence type="predicted"/>
<reference key="1">
    <citation type="journal article" date="1998" name="Microbiology">
        <title>The 172 kb prkA-addAB region from 83 degrees to 97 degrees of the Bacillus subtilis chromosome contains several dysfunctional genes, the glyB marker, many genes encoding transporter proteins, and the ubiquitous hit gene.</title>
        <authorList>
            <person name="Noback M.A."/>
            <person name="Holsappel S."/>
            <person name="Kiewiet R."/>
            <person name="Terpstra P."/>
            <person name="Wambutt R."/>
            <person name="Wedler H."/>
            <person name="Venema G."/>
            <person name="Bron S."/>
        </authorList>
    </citation>
    <scope>NUCLEOTIDE SEQUENCE [GENOMIC DNA]</scope>
    <source>
        <strain>168</strain>
    </source>
</reference>
<reference key="2">
    <citation type="journal article" date="1997" name="Nature">
        <title>The complete genome sequence of the Gram-positive bacterium Bacillus subtilis.</title>
        <authorList>
            <person name="Kunst F."/>
            <person name="Ogasawara N."/>
            <person name="Moszer I."/>
            <person name="Albertini A.M."/>
            <person name="Alloni G."/>
            <person name="Azevedo V."/>
            <person name="Bertero M.G."/>
            <person name="Bessieres P."/>
            <person name="Bolotin A."/>
            <person name="Borchert S."/>
            <person name="Borriss R."/>
            <person name="Boursier L."/>
            <person name="Brans A."/>
            <person name="Braun M."/>
            <person name="Brignell S.C."/>
            <person name="Bron S."/>
            <person name="Brouillet S."/>
            <person name="Bruschi C.V."/>
            <person name="Caldwell B."/>
            <person name="Capuano V."/>
            <person name="Carter N.M."/>
            <person name="Choi S.-K."/>
            <person name="Codani J.-J."/>
            <person name="Connerton I.F."/>
            <person name="Cummings N.J."/>
            <person name="Daniel R.A."/>
            <person name="Denizot F."/>
            <person name="Devine K.M."/>
            <person name="Duesterhoeft A."/>
            <person name="Ehrlich S.D."/>
            <person name="Emmerson P.T."/>
            <person name="Entian K.-D."/>
            <person name="Errington J."/>
            <person name="Fabret C."/>
            <person name="Ferrari E."/>
            <person name="Foulger D."/>
            <person name="Fritz C."/>
            <person name="Fujita M."/>
            <person name="Fujita Y."/>
            <person name="Fuma S."/>
            <person name="Galizzi A."/>
            <person name="Galleron N."/>
            <person name="Ghim S.-Y."/>
            <person name="Glaser P."/>
            <person name="Goffeau A."/>
            <person name="Golightly E.J."/>
            <person name="Grandi G."/>
            <person name="Guiseppi G."/>
            <person name="Guy B.J."/>
            <person name="Haga K."/>
            <person name="Haiech J."/>
            <person name="Harwood C.R."/>
            <person name="Henaut A."/>
            <person name="Hilbert H."/>
            <person name="Holsappel S."/>
            <person name="Hosono S."/>
            <person name="Hullo M.-F."/>
            <person name="Itaya M."/>
            <person name="Jones L.-M."/>
            <person name="Joris B."/>
            <person name="Karamata D."/>
            <person name="Kasahara Y."/>
            <person name="Klaerr-Blanchard M."/>
            <person name="Klein C."/>
            <person name="Kobayashi Y."/>
            <person name="Koetter P."/>
            <person name="Koningstein G."/>
            <person name="Krogh S."/>
            <person name="Kumano M."/>
            <person name="Kurita K."/>
            <person name="Lapidus A."/>
            <person name="Lardinois S."/>
            <person name="Lauber J."/>
            <person name="Lazarevic V."/>
            <person name="Lee S.-M."/>
            <person name="Levine A."/>
            <person name="Liu H."/>
            <person name="Masuda S."/>
            <person name="Mauel C."/>
            <person name="Medigue C."/>
            <person name="Medina N."/>
            <person name="Mellado R.P."/>
            <person name="Mizuno M."/>
            <person name="Moestl D."/>
            <person name="Nakai S."/>
            <person name="Noback M."/>
            <person name="Noone D."/>
            <person name="O'Reilly M."/>
            <person name="Ogawa K."/>
            <person name="Ogiwara A."/>
            <person name="Oudega B."/>
            <person name="Park S.-H."/>
            <person name="Parro V."/>
            <person name="Pohl T.M."/>
            <person name="Portetelle D."/>
            <person name="Porwollik S."/>
            <person name="Prescott A.M."/>
            <person name="Presecan E."/>
            <person name="Pujic P."/>
            <person name="Purnelle B."/>
            <person name="Rapoport G."/>
            <person name="Rey M."/>
            <person name="Reynolds S."/>
            <person name="Rieger M."/>
            <person name="Rivolta C."/>
            <person name="Rocha E."/>
            <person name="Roche B."/>
            <person name="Rose M."/>
            <person name="Sadaie Y."/>
            <person name="Sato T."/>
            <person name="Scanlan E."/>
            <person name="Schleich S."/>
            <person name="Schroeter R."/>
            <person name="Scoffone F."/>
            <person name="Sekiguchi J."/>
            <person name="Sekowska A."/>
            <person name="Seror S.J."/>
            <person name="Serror P."/>
            <person name="Shin B.-S."/>
            <person name="Soldo B."/>
            <person name="Sorokin A."/>
            <person name="Tacconi E."/>
            <person name="Takagi T."/>
            <person name="Takahashi H."/>
            <person name="Takemaru K."/>
            <person name="Takeuchi M."/>
            <person name="Tamakoshi A."/>
            <person name="Tanaka T."/>
            <person name="Terpstra P."/>
            <person name="Tognoni A."/>
            <person name="Tosato V."/>
            <person name="Uchiyama S."/>
            <person name="Vandenbol M."/>
            <person name="Vannier F."/>
            <person name="Vassarotti A."/>
            <person name="Viari A."/>
            <person name="Wambutt R."/>
            <person name="Wedler E."/>
            <person name="Wedler H."/>
            <person name="Weitzenegger T."/>
            <person name="Winters P."/>
            <person name="Wipat A."/>
            <person name="Yamamoto H."/>
            <person name="Yamane K."/>
            <person name="Yasumoto K."/>
            <person name="Yata K."/>
            <person name="Yoshida K."/>
            <person name="Yoshikawa H.-F."/>
            <person name="Zumstein E."/>
            <person name="Yoshikawa H."/>
            <person name="Danchin A."/>
        </authorList>
    </citation>
    <scope>NUCLEOTIDE SEQUENCE [LARGE SCALE GENOMIC DNA]</scope>
    <source>
        <strain>168</strain>
    </source>
</reference>
<feature type="chain" id="PRO_0000386475" description="Uncharacterized membrane protein YhjE">
    <location>
        <begin position="1"/>
        <end position="207"/>
    </location>
</feature>
<feature type="transmembrane region" description="Helical" evidence="1">
    <location>
        <begin position="28"/>
        <end position="48"/>
    </location>
</feature>
<feature type="transmembrane region" description="Helical" evidence="1">
    <location>
        <begin position="59"/>
        <end position="79"/>
    </location>
</feature>
<feature type="transmembrane region" description="Helical" evidence="1">
    <location>
        <begin position="112"/>
        <end position="132"/>
    </location>
</feature>
<feature type="transmembrane region" description="Helical" evidence="1">
    <location>
        <begin position="140"/>
        <end position="160"/>
    </location>
</feature>
<feature type="transmembrane region" description="Helical" evidence="1">
    <location>
        <begin position="165"/>
        <end position="185"/>
    </location>
</feature>
<evidence type="ECO:0000255" key="1"/>
<evidence type="ECO:0000305" key="2"/>
<accession>O07559</accession>
<accession>Q796S7</accession>
<protein>
    <recommendedName>
        <fullName>Uncharacterized membrane protein YhjE</fullName>
    </recommendedName>
</protein>
<keyword id="KW-1003">Cell membrane</keyword>
<keyword id="KW-0472">Membrane</keyword>
<keyword id="KW-1185">Reference proteome</keyword>
<keyword id="KW-0812">Transmembrane</keyword>
<keyword id="KW-1133">Transmembrane helix</keyword>